<protein>
    <recommendedName>
        <fullName evidence="3">Uncharacterized skeletal organic matrix protein 2</fullName>
        <shortName evidence="3">Uncharacterized SOMP-2</shortName>
    </recommendedName>
</protein>
<comment type="subcellular location">
    <subcellularLocation>
        <location evidence="1">Membrane</location>
        <topology evidence="1">Single-pass membrane protein</topology>
    </subcellularLocation>
    <text evidence="1 3">Presence in the organic matrix of the skeleton may be due to shedding of a soluble peptide.</text>
</comment>
<comment type="tissue specificity">
    <text evidence="2">Component of the acid-insoluble and acid-soluble organic matrix of the aragonitic skeleton (at protein level).</text>
</comment>
<keyword id="KW-0903">Direct protein sequencing</keyword>
<keyword id="KW-0472">Membrane</keyword>
<keyword id="KW-0732">Signal</keyword>
<keyword id="KW-0812">Transmembrane</keyword>
<keyword id="KW-1133">Transmembrane helix</keyword>
<accession>B7WFQ1</accession>
<proteinExistence type="evidence at protein level"/>
<organism>
    <name type="scientific">Acropora millepora</name>
    <name type="common">Staghorn coral</name>
    <name type="synonym">Heteropora millepora</name>
    <dbReference type="NCBI Taxonomy" id="45264"/>
    <lineage>
        <taxon>Eukaryota</taxon>
        <taxon>Metazoa</taxon>
        <taxon>Cnidaria</taxon>
        <taxon>Anthozoa</taxon>
        <taxon>Hexacorallia</taxon>
        <taxon>Scleractinia</taxon>
        <taxon>Astrocoeniina</taxon>
        <taxon>Acroporidae</taxon>
        <taxon>Acropora</taxon>
    </lineage>
</organism>
<dbReference type="EMBL" id="JR982706">
    <property type="status" value="NOT_ANNOTATED_CDS"/>
    <property type="molecule type" value="mRNA"/>
</dbReference>
<dbReference type="OrthoDB" id="5978657at2759"/>
<dbReference type="GO" id="GO:0016020">
    <property type="term" value="C:membrane"/>
    <property type="evidence" value="ECO:0007669"/>
    <property type="project" value="UniProtKB-SubCell"/>
</dbReference>
<reference evidence="4" key="1">
    <citation type="journal article" date="2012" name="Mol. Ecol.">
        <title>Whole transcriptome analysis of the coral Acropora millepora reveals complex responses to CO(2)-driven acidification during the initiation of calcification.</title>
        <authorList>
            <person name="Moya A."/>
            <person name="Huisman L."/>
            <person name="Ball E.E."/>
            <person name="Hayward D.C."/>
            <person name="Grasso L.C."/>
            <person name="Chua C.M."/>
            <person name="Woo H.N."/>
            <person name="Gattuso J.P."/>
            <person name="Foret S."/>
            <person name="Miller D.J."/>
        </authorList>
    </citation>
    <scope>NUCLEOTIDE SEQUENCE [MRNA]</scope>
</reference>
<reference evidence="4" key="2">
    <citation type="journal article" date="2013" name="Mol. Biol. Evol.">
        <title>The skeletal proteome of the coral Acropora millepora: the evolution of calcification by co-option and domain shuffling.</title>
        <authorList>
            <person name="Ramos-Silva P."/>
            <person name="Kaandorp J."/>
            <person name="Huisman L."/>
            <person name="Marie B."/>
            <person name="Zanella-Cleon I."/>
            <person name="Guichard N."/>
            <person name="Miller D.J."/>
            <person name="Marin F."/>
        </authorList>
    </citation>
    <scope>PROTEIN SEQUENCE OF 182-196; 204-216; 411-424 AND 431-443</scope>
    <scope>TISSUE SPECIFICITY</scope>
    <scope>IDENTIFICATION BY MASS SPECTROMETRY</scope>
</reference>
<evidence type="ECO:0000255" key="1"/>
<evidence type="ECO:0000269" key="2">
    <source>
    </source>
</evidence>
<evidence type="ECO:0000303" key="3">
    <source>
    </source>
</evidence>
<evidence type="ECO:0000305" key="4"/>
<feature type="signal peptide" evidence="1">
    <location>
        <begin position="1"/>
        <end position="19"/>
    </location>
</feature>
<feature type="chain" id="PRO_0000429756" description="Uncharacterized skeletal organic matrix protein 2" evidence="1">
    <location>
        <begin position="20"/>
        <end position="505"/>
    </location>
</feature>
<feature type="topological domain" description="Extracellular" evidence="1">
    <location>
        <begin position="20"/>
        <end position="483"/>
    </location>
</feature>
<feature type="transmembrane region" description="Helical" evidence="1">
    <location>
        <begin position="484"/>
        <end position="504"/>
    </location>
</feature>
<feature type="topological domain" description="Cytoplasmic" evidence="1">
    <location>
        <position position="505"/>
    </location>
</feature>
<sequence length="505" mass="54906">MILFTAIILVASVVHVVVSSPQQCYYCVEDDCETMSLWINQTCATSQRSLGTSHCGTAAVRYHEGYLGGVPLETTVKGCFDCTDKSAACFALAGLLKSSLGWVVQQCDINCCNDTNCNTNVTILSQNATNVLRRDAFGTTSCYECEESDNYTCILKQQSQTCRTSRAALGITHCSSAKVKTRNVLTGTVDVSFIRGCISCEDKKSACALLAGSFKFRKHATMLECDIECCNGSYCNDGAASLSKCFHCMEDDGLSCSARQQRQICSLDPESLGTTHCGSAVGRKRNQNGAIQNYFYRGCFDCSKKKEACFTLGGYWKGDVNAPGATTLLECELQCCDPNVINGSYCNVETPILKPAAITVFTPTVTGPAQCNVCLEKDETSCSENQQTQVCGIDPYSLGTTHCGSAVGRYRQSNGDMVYGFYRGCINCADKMAACAAVGGFRKNVQKWTQLQCEIECCTEDNCNTHTPRLVEVEQPNSAPRGEIHQLFRCTFVAVFIVFACFIVC</sequence>
<name>USOM2_ACRMI</name>